<reference key="1">
    <citation type="journal article" date="2005" name="Science">
        <title>The transcriptional landscape of the mammalian genome.</title>
        <authorList>
            <person name="Carninci P."/>
            <person name="Kasukawa T."/>
            <person name="Katayama S."/>
            <person name="Gough J."/>
            <person name="Frith M.C."/>
            <person name="Maeda N."/>
            <person name="Oyama R."/>
            <person name="Ravasi T."/>
            <person name="Lenhard B."/>
            <person name="Wells C."/>
            <person name="Kodzius R."/>
            <person name="Shimokawa K."/>
            <person name="Bajic V.B."/>
            <person name="Brenner S.E."/>
            <person name="Batalov S."/>
            <person name="Forrest A.R."/>
            <person name="Zavolan M."/>
            <person name="Davis M.J."/>
            <person name="Wilming L.G."/>
            <person name="Aidinis V."/>
            <person name="Allen J.E."/>
            <person name="Ambesi-Impiombato A."/>
            <person name="Apweiler R."/>
            <person name="Aturaliya R.N."/>
            <person name="Bailey T.L."/>
            <person name="Bansal M."/>
            <person name="Baxter L."/>
            <person name="Beisel K.W."/>
            <person name="Bersano T."/>
            <person name="Bono H."/>
            <person name="Chalk A.M."/>
            <person name="Chiu K.P."/>
            <person name="Choudhary V."/>
            <person name="Christoffels A."/>
            <person name="Clutterbuck D.R."/>
            <person name="Crowe M.L."/>
            <person name="Dalla E."/>
            <person name="Dalrymple B.P."/>
            <person name="de Bono B."/>
            <person name="Della Gatta G."/>
            <person name="di Bernardo D."/>
            <person name="Down T."/>
            <person name="Engstrom P."/>
            <person name="Fagiolini M."/>
            <person name="Faulkner G."/>
            <person name="Fletcher C.F."/>
            <person name="Fukushima T."/>
            <person name="Furuno M."/>
            <person name="Futaki S."/>
            <person name="Gariboldi M."/>
            <person name="Georgii-Hemming P."/>
            <person name="Gingeras T.R."/>
            <person name="Gojobori T."/>
            <person name="Green R.E."/>
            <person name="Gustincich S."/>
            <person name="Harbers M."/>
            <person name="Hayashi Y."/>
            <person name="Hensch T.K."/>
            <person name="Hirokawa N."/>
            <person name="Hill D."/>
            <person name="Huminiecki L."/>
            <person name="Iacono M."/>
            <person name="Ikeo K."/>
            <person name="Iwama A."/>
            <person name="Ishikawa T."/>
            <person name="Jakt M."/>
            <person name="Kanapin A."/>
            <person name="Katoh M."/>
            <person name="Kawasawa Y."/>
            <person name="Kelso J."/>
            <person name="Kitamura H."/>
            <person name="Kitano H."/>
            <person name="Kollias G."/>
            <person name="Krishnan S.P."/>
            <person name="Kruger A."/>
            <person name="Kummerfeld S.K."/>
            <person name="Kurochkin I.V."/>
            <person name="Lareau L.F."/>
            <person name="Lazarevic D."/>
            <person name="Lipovich L."/>
            <person name="Liu J."/>
            <person name="Liuni S."/>
            <person name="McWilliam S."/>
            <person name="Madan Babu M."/>
            <person name="Madera M."/>
            <person name="Marchionni L."/>
            <person name="Matsuda H."/>
            <person name="Matsuzawa S."/>
            <person name="Miki H."/>
            <person name="Mignone F."/>
            <person name="Miyake S."/>
            <person name="Morris K."/>
            <person name="Mottagui-Tabar S."/>
            <person name="Mulder N."/>
            <person name="Nakano N."/>
            <person name="Nakauchi H."/>
            <person name="Ng P."/>
            <person name="Nilsson R."/>
            <person name="Nishiguchi S."/>
            <person name="Nishikawa S."/>
            <person name="Nori F."/>
            <person name="Ohara O."/>
            <person name="Okazaki Y."/>
            <person name="Orlando V."/>
            <person name="Pang K.C."/>
            <person name="Pavan W.J."/>
            <person name="Pavesi G."/>
            <person name="Pesole G."/>
            <person name="Petrovsky N."/>
            <person name="Piazza S."/>
            <person name="Reed J."/>
            <person name="Reid J.F."/>
            <person name="Ring B.Z."/>
            <person name="Ringwald M."/>
            <person name="Rost B."/>
            <person name="Ruan Y."/>
            <person name="Salzberg S.L."/>
            <person name="Sandelin A."/>
            <person name="Schneider C."/>
            <person name="Schoenbach C."/>
            <person name="Sekiguchi K."/>
            <person name="Semple C.A."/>
            <person name="Seno S."/>
            <person name="Sessa L."/>
            <person name="Sheng Y."/>
            <person name="Shibata Y."/>
            <person name="Shimada H."/>
            <person name="Shimada K."/>
            <person name="Silva D."/>
            <person name="Sinclair B."/>
            <person name="Sperling S."/>
            <person name="Stupka E."/>
            <person name="Sugiura K."/>
            <person name="Sultana R."/>
            <person name="Takenaka Y."/>
            <person name="Taki K."/>
            <person name="Tammoja K."/>
            <person name="Tan S.L."/>
            <person name="Tang S."/>
            <person name="Taylor M.S."/>
            <person name="Tegner J."/>
            <person name="Teichmann S.A."/>
            <person name="Ueda H.R."/>
            <person name="van Nimwegen E."/>
            <person name="Verardo R."/>
            <person name="Wei C.L."/>
            <person name="Yagi K."/>
            <person name="Yamanishi H."/>
            <person name="Zabarovsky E."/>
            <person name="Zhu S."/>
            <person name="Zimmer A."/>
            <person name="Hide W."/>
            <person name="Bult C."/>
            <person name="Grimmond S.M."/>
            <person name="Teasdale R.D."/>
            <person name="Liu E.T."/>
            <person name="Brusic V."/>
            <person name="Quackenbush J."/>
            <person name="Wahlestedt C."/>
            <person name="Mattick J.S."/>
            <person name="Hume D.A."/>
            <person name="Kai C."/>
            <person name="Sasaki D."/>
            <person name="Tomaru Y."/>
            <person name="Fukuda S."/>
            <person name="Kanamori-Katayama M."/>
            <person name="Suzuki M."/>
            <person name="Aoki J."/>
            <person name="Arakawa T."/>
            <person name="Iida J."/>
            <person name="Imamura K."/>
            <person name="Itoh M."/>
            <person name="Kato T."/>
            <person name="Kawaji H."/>
            <person name="Kawagashira N."/>
            <person name="Kawashima T."/>
            <person name="Kojima M."/>
            <person name="Kondo S."/>
            <person name="Konno H."/>
            <person name="Nakano K."/>
            <person name="Ninomiya N."/>
            <person name="Nishio T."/>
            <person name="Okada M."/>
            <person name="Plessy C."/>
            <person name="Shibata K."/>
            <person name="Shiraki T."/>
            <person name="Suzuki S."/>
            <person name="Tagami M."/>
            <person name="Waki K."/>
            <person name="Watahiki A."/>
            <person name="Okamura-Oho Y."/>
            <person name="Suzuki H."/>
            <person name="Kawai J."/>
            <person name="Hayashizaki Y."/>
        </authorList>
    </citation>
    <scope>NUCLEOTIDE SEQUENCE [LARGE SCALE MRNA] (ISOFORMS 1 AND 2)</scope>
    <source>
        <strain>C57BL/6J</strain>
        <strain>NOD</strain>
        <tissue>Embryo</tissue>
        <tissue>Liver</tissue>
        <tissue>Lung</tissue>
        <tissue>Thymus</tissue>
    </source>
</reference>
<reference key="2">
    <citation type="journal article" date="2004" name="Genome Res.">
        <title>The status, quality, and expansion of the NIH full-length cDNA project: the Mammalian Gene Collection (MGC).</title>
        <authorList>
            <consortium name="The MGC Project Team"/>
        </authorList>
    </citation>
    <scope>NUCLEOTIDE SEQUENCE [LARGE SCALE MRNA] (ISOFORM 1)</scope>
    <source>
        <strain>Czech II</strain>
        <tissue>Mammary tumor</tissue>
    </source>
</reference>
<reference key="3">
    <citation type="journal article" date="2010" name="Cell">
        <title>A tissue-specific atlas of mouse protein phosphorylation and expression.</title>
        <authorList>
            <person name="Huttlin E.L."/>
            <person name="Jedrychowski M.P."/>
            <person name="Elias J.E."/>
            <person name="Goswami T."/>
            <person name="Rad R."/>
            <person name="Beausoleil S.A."/>
            <person name="Villen J."/>
            <person name="Haas W."/>
            <person name="Sowa M.E."/>
            <person name="Gygi S.P."/>
        </authorList>
    </citation>
    <scope>IDENTIFICATION BY MASS SPECTROMETRY [LARGE SCALE ANALYSIS]</scope>
    <source>
        <tissue>Kidney</tissue>
        <tissue>Lung</tissue>
    </source>
</reference>
<reference key="4">
    <citation type="journal article" date="2006" name="J. Biol. Chem.">
        <title>The BTB-kelch protein LZTR-1 is a novel Golgi protein that is degraded upon induction of apoptosis.</title>
        <authorList>
            <person name="Nacak T.G."/>
            <person name="Leptien K."/>
            <person name="Fellner D."/>
            <person name="Augustin H.G."/>
            <person name="Kroll J."/>
        </authorList>
    </citation>
    <scope>TISSUE SPECIFICITY</scope>
</reference>
<reference key="5">
    <citation type="journal article" date="2018" name="Science">
        <title>Mutations in LZTR1 drive human disease by dysregulating RAS ubiquitination.</title>
        <authorList>
            <person name="Steklov M."/>
            <person name="Pandolfi S."/>
            <person name="Baietti M.F."/>
            <person name="Batiuk A."/>
            <person name="Carai P."/>
            <person name="Najm P."/>
            <person name="Zhang M."/>
            <person name="Jang H."/>
            <person name="Renzi F."/>
            <person name="Cai Y."/>
            <person name="Abbasi Asbagh L."/>
            <person name="Pastor T."/>
            <person name="De Troyer M."/>
            <person name="Simicek M."/>
            <person name="Radaelli E."/>
            <person name="Brems H."/>
            <person name="Legius E."/>
            <person name="Tavernier J."/>
            <person name="Gevaert K."/>
            <person name="Impens F."/>
            <person name="Messiaen L."/>
            <person name="Nussinov R."/>
            <person name="Heymans S."/>
            <person name="Eyckerman S."/>
            <person name="Sablina A.A."/>
        </authorList>
    </citation>
    <scope>FUNCTION</scope>
    <scope>DISRUPTION PHENOTYPE</scope>
</reference>
<organism>
    <name type="scientific">Mus musculus</name>
    <name type="common">Mouse</name>
    <dbReference type="NCBI Taxonomy" id="10090"/>
    <lineage>
        <taxon>Eukaryota</taxon>
        <taxon>Metazoa</taxon>
        <taxon>Chordata</taxon>
        <taxon>Craniata</taxon>
        <taxon>Vertebrata</taxon>
        <taxon>Euteleostomi</taxon>
        <taxon>Mammalia</taxon>
        <taxon>Eutheria</taxon>
        <taxon>Euarchontoglires</taxon>
        <taxon>Glires</taxon>
        <taxon>Rodentia</taxon>
        <taxon>Myomorpha</taxon>
        <taxon>Muroidea</taxon>
        <taxon>Muridae</taxon>
        <taxon>Murinae</taxon>
        <taxon>Mus</taxon>
        <taxon>Mus</taxon>
    </lineage>
</organism>
<comment type="function">
    <text evidence="6">Substrate-specific adapter of a BCR (BTB-CUL3-RBX1) E3 ubiquitin-protein ligase complex that mediates ubiquitination of Ras (K-Ras/KRAS, N-Ras/NRAS and H-Ras/HRAS) (PubMed:30442762). Is a negative regulator of RAS-MAPK signaling that acts by controlling Ras levels and decreasing Ras association with membranes (PubMed:30442762).</text>
</comment>
<comment type="pathway">
    <text evidence="1">Protein modification; protein ubiquitination.</text>
</comment>
<comment type="subunit">
    <text evidence="1">Homodimer. Component of the BCR(LZTR1) E3 ubiquitin ligase complex, at least composed of CUL3, LZTR1 and RBX1. Interacts with Ras (K-Ras/KRAS, N-Ras/NRAS and H-Ras/HRAS). Interacts with RAF1. Interacts with SHOC2. Interacts with PPP1CB.</text>
</comment>
<comment type="subcellular location">
    <subcellularLocation>
        <location evidence="1">Endomembrane system</location>
    </subcellularLocation>
    <subcellularLocation>
        <location evidence="1">Recycling endosome</location>
    </subcellularLocation>
    <subcellularLocation>
        <location evidence="1">Golgi apparatus</location>
    </subcellularLocation>
</comment>
<comment type="alternative products">
    <event type="alternative splicing"/>
    <isoform>
        <id>Q9CQ33-1</id>
        <name>1</name>
        <sequence type="displayed"/>
    </isoform>
    <isoform>
        <id>Q9CQ33-2</id>
        <name>2</name>
        <sequence type="described" ref="VSP_007170"/>
    </isoform>
</comment>
<comment type="tissue specificity">
    <text evidence="5">Widely expressed.</text>
</comment>
<comment type="PTM">
    <text evidence="1">Phosphorylated on tyrosine upon induction of apoptosis, leading to its degradation by the proteasome.</text>
</comment>
<comment type="disruption phenotype">
    <text evidence="6">Embryonic lethality between 17.5 dpc and birth (PubMed:30442762). Impaired ubiquitination of Ras (K-Ras/Kras, N-Ras/Nras and H-Ras/Hras) (PubMed:30442762). Heterozygous mice display heart malformations, including decreased left ventricular systolic function, increased diastolic dimensions, eccentric hypertrophy, increased cardiomyocyte area and reduced longevity; phenotypes that are reminiscent of human Noonan Syndrome (PubMed:30442762).</text>
</comment>
<comment type="miscellaneous">
    <molecule>Isoform 2</molecule>
    <text evidence="8">May result from the retention of an intron in the cDNA in position 800.</text>
</comment>
<comment type="similarity">
    <text evidence="8">Belongs to the LZTR1 family.</text>
</comment>
<comment type="sequence caution" evidence="8">
    <conflict type="erroneous initiation">
        <sequence resource="EMBL-CDS" id="BAC40662"/>
    </conflict>
</comment>
<protein>
    <recommendedName>
        <fullName>Leucine-zipper-like transcriptional regulator 1</fullName>
        <shortName>LZTR-1</shortName>
    </recommendedName>
</protein>
<name>LZTR1_MOUSE</name>
<dbReference type="EMBL" id="AK004561">
    <property type="protein sequence ID" value="BAB23373.2"/>
    <property type="molecule type" value="mRNA"/>
</dbReference>
<dbReference type="EMBL" id="AK005037">
    <property type="protein sequence ID" value="BAB23764.2"/>
    <property type="molecule type" value="mRNA"/>
</dbReference>
<dbReference type="EMBL" id="AK083411">
    <property type="protein sequence ID" value="BAC38905.1"/>
    <property type="molecule type" value="mRNA"/>
</dbReference>
<dbReference type="EMBL" id="AK088938">
    <property type="protein sequence ID" value="BAC40662.1"/>
    <property type="status" value="ALT_INIT"/>
    <property type="molecule type" value="mRNA"/>
</dbReference>
<dbReference type="EMBL" id="BC034400">
    <property type="protein sequence ID" value="AAH34400.1"/>
    <property type="molecule type" value="mRNA"/>
</dbReference>
<dbReference type="CCDS" id="CCDS37272.1">
    <molecule id="Q9CQ33-1"/>
</dbReference>
<dbReference type="RefSeq" id="NP_001318155.1">
    <property type="nucleotide sequence ID" value="NM_001331226.1"/>
</dbReference>
<dbReference type="RefSeq" id="NP_001318156.1">
    <property type="nucleotide sequence ID" value="NM_001331227.1"/>
</dbReference>
<dbReference type="RefSeq" id="NP_080084.2">
    <molecule id="Q9CQ33-1"/>
    <property type="nucleotide sequence ID" value="NM_025808.4"/>
</dbReference>
<dbReference type="SMR" id="Q9CQ33"/>
<dbReference type="BioGRID" id="211770">
    <property type="interactions" value="4"/>
</dbReference>
<dbReference type="FunCoup" id="Q9CQ33">
    <property type="interactions" value="1811"/>
</dbReference>
<dbReference type="IntAct" id="Q9CQ33">
    <property type="interactions" value="1"/>
</dbReference>
<dbReference type="MINT" id="Q9CQ33"/>
<dbReference type="STRING" id="10090.ENSMUSP00000023444"/>
<dbReference type="iPTMnet" id="Q9CQ33"/>
<dbReference type="PhosphoSitePlus" id="Q9CQ33"/>
<dbReference type="PaxDb" id="10090-ENSMUSP00000111345"/>
<dbReference type="ProteomicsDB" id="290208">
    <molecule id="Q9CQ33-1"/>
</dbReference>
<dbReference type="ProteomicsDB" id="290209">
    <molecule id="Q9CQ33-2"/>
</dbReference>
<dbReference type="Pumba" id="Q9CQ33"/>
<dbReference type="Antibodypedia" id="8368">
    <property type="antibodies" value="133 antibodies from 27 providers"/>
</dbReference>
<dbReference type="DNASU" id="66863"/>
<dbReference type="Ensembl" id="ENSMUST00000023444.11">
    <molecule id="Q9CQ33-1"/>
    <property type="protein sequence ID" value="ENSMUSP00000023444.4"/>
    <property type="gene ID" value="ENSMUSG00000022761.13"/>
</dbReference>
<dbReference type="GeneID" id="66863"/>
<dbReference type="KEGG" id="mmu:66863"/>
<dbReference type="UCSC" id="uc007yla.1">
    <molecule id="Q9CQ33-1"/>
    <property type="organism name" value="mouse"/>
</dbReference>
<dbReference type="UCSC" id="uc007ylb.1">
    <molecule id="Q9CQ33-2"/>
    <property type="organism name" value="mouse"/>
</dbReference>
<dbReference type="AGR" id="MGI:1914113"/>
<dbReference type="CTD" id="8216"/>
<dbReference type="MGI" id="MGI:1914113">
    <property type="gene designation" value="Lztr1"/>
</dbReference>
<dbReference type="VEuPathDB" id="HostDB:ENSMUSG00000022761"/>
<dbReference type="eggNOG" id="KOG4693">
    <property type="taxonomic scope" value="Eukaryota"/>
</dbReference>
<dbReference type="GeneTree" id="ENSGT00940000158190"/>
<dbReference type="HOGENOM" id="CLU_012081_0_0_1"/>
<dbReference type="InParanoid" id="Q9CQ33"/>
<dbReference type="OMA" id="YKEAIYV"/>
<dbReference type="OrthoDB" id="10250130at2759"/>
<dbReference type="PhylomeDB" id="Q9CQ33"/>
<dbReference type="UniPathway" id="UPA00143"/>
<dbReference type="BioGRID-ORCS" id="66863">
    <property type="hits" value="11 hits in 82 CRISPR screens"/>
</dbReference>
<dbReference type="ChiTaRS" id="Lztr1">
    <property type="organism name" value="mouse"/>
</dbReference>
<dbReference type="PRO" id="PR:Q9CQ33"/>
<dbReference type="Proteomes" id="UP000000589">
    <property type="component" value="Chromosome 16"/>
</dbReference>
<dbReference type="RNAct" id="Q9CQ33">
    <property type="molecule type" value="protein"/>
</dbReference>
<dbReference type="Bgee" id="ENSMUSG00000022761">
    <property type="expression patterns" value="Expressed in external carotid artery and 283 other cell types or tissues"/>
</dbReference>
<dbReference type="ExpressionAtlas" id="Q9CQ33">
    <property type="expression patterns" value="baseline and differential"/>
</dbReference>
<dbReference type="GO" id="GO:0031463">
    <property type="term" value="C:Cul3-RING ubiquitin ligase complex"/>
    <property type="evidence" value="ECO:0000250"/>
    <property type="project" value="UniProtKB"/>
</dbReference>
<dbReference type="GO" id="GO:0012505">
    <property type="term" value="C:endomembrane system"/>
    <property type="evidence" value="ECO:0000250"/>
    <property type="project" value="UniProtKB"/>
</dbReference>
<dbReference type="GO" id="GO:0005794">
    <property type="term" value="C:Golgi apparatus"/>
    <property type="evidence" value="ECO:0000250"/>
    <property type="project" value="UniProtKB"/>
</dbReference>
<dbReference type="GO" id="GO:0055038">
    <property type="term" value="C:recycling endosome membrane"/>
    <property type="evidence" value="ECO:0000250"/>
    <property type="project" value="UniProtKB"/>
</dbReference>
<dbReference type="GO" id="GO:0031267">
    <property type="term" value="F:small GTPase binding"/>
    <property type="evidence" value="ECO:0000250"/>
    <property type="project" value="UniProtKB"/>
</dbReference>
<dbReference type="GO" id="GO:0046580">
    <property type="term" value="P:negative regulation of Ras protein signal transduction"/>
    <property type="evidence" value="ECO:0000315"/>
    <property type="project" value="UniProtKB"/>
</dbReference>
<dbReference type="GO" id="GO:0016567">
    <property type="term" value="P:protein ubiquitination"/>
    <property type="evidence" value="ECO:0000315"/>
    <property type="project" value="UniProtKB"/>
</dbReference>
<dbReference type="CDD" id="cd18505">
    <property type="entry name" value="BACK1_LZTR1"/>
    <property type="match status" value="1"/>
</dbReference>
<dbReference type="CDD" id="cd18506">
    <property type="entry name" value="BACK2_LZTR1"/>
    <property type="match status" value="1"/>
</dbReference>
<dbReference type="CDD" id="cd18308">
    <property type="entry name" value="BTB1_POZ_LZTR1"/>
    <property type="match status" value="1"/>
</dbReference>
<dbReference type="CDD" id="cd18309">
    <property type="entry name" value="BTB2_POZ_LZTR1"/>
    <property type="match status" value="1"/>
</dbReference>
<dbReference type="FunFam" id="3.30.710.10:FF:000024">
    <property type="entry name" value="Leucine-zipper-like transcriptional regulator 1"/>
    <property type="match status" value="1"/>
</dbReference>
<dbReference type="FunFam" id="2.120.10.80:FF:000038">
    <property type="entry name" value="leucine-zipper-like transcriptional regulator 1 isoform X1"/>
    <property type="match status" value="1"/>
</dbReference>
<dbReference type="FunFam" id="2.120.10.80:FF:000045">
    <property type="entry name" value="leucine-zipper-like transcriptional regulator 1 isoform X1"/>
    <property type="match status" value="1"/>
</dbReference>
<dbReference type="FunFam" id="3.30.710.10:FF:000049">
    <property type="entry name" value="leucine-zipper-like transcriptional regulator 1 isoform X1"/>
    <property type="match status" value="1"/>
</dbReference>
<dbReference type="Gene3D" id="2.120.10.80">
    <property type="entry name" value="Kelch-type beta propeller"/>
    <property type="match status" value="2"/>
</dbReference>
<dbReference type="Gene3D" id="3.30.710.10">
    <property type="entry name" value="Potassium Channel Kv1.1, Chain A"/>
    <property type="match status" value="2"/>
</dbReference>
<dbReference type="InterPro" id="IPR000210">
    <property type="entry name" value="BTB/POZ_dom"/>
</dbReference>
<dbReference type="InterPro" id="IPR015915">
    <property type="entry name" value="Kelch-typ_b-propeller"/>
</dbReference>
<dbReference type="InterPro" id="IPR006652">
    <property type="entry name" value="Kelch_1"/>
</dbReference>
<dbReference type="InterPro" id="IPR051568">
    <property type="entry name" value="LZTR1/Attractin"/>
</dbReference>
<dbReference type="InterPro" id="IPR011333">
    <property type="entry name" value="SKP1/BTB/POZ_sf"/>
</dbReference>
<dbReference type="PANTHER" id="PTHR46376">
    <property type="entry name" value="LEUCINE-ZIPPER-LIKE TRANSCRIPTIONAL REGULATOR 1"/>
    <property type="match status" value="1"/>
</dbReference>
<dbReference type="PANTHER" id="PTHR46376:SF1">
    <property type="entry name" value="LEUCINE-ZIPPER-LIKE TRANSCRIPTIONAL REGULATOR 1"/>
    <property type="match status" value="1"/>
</dbReference>
<dbReference type="Pfam" id="PF00651">
    <property type="entry name" value="BTB"/>
    <property type="match status" value="1"/>
</dbReference>
<dbReference type="Pfam" id="PF01344">
    <property type="entry name" value="Kelch_1"/>
    <property type="match status" value="1"/>
</dbReference>
<dbReference type="Pfam" id="PF24681">
    <property type="entry name" value="Kelch_KLHDC2_KLHL20_DRC7"/>
    <property type="match status" value="1"/>
</dbReference>
<dbReference type="SMART" id="SM00225">
    <property type="entry name" value="BTB"/>
    <property type="match status" value="2"/>
</dbReference>
<dbReference type="SMART" id="SM00612">
    <property type="entry name" value="Kelch"/>
    <property type="match status" value="4"/>
</dbReference>
<dbReference type="SUPFAM" id="SSF117281">
    <property type="entry name" value="Kelch motif"/>
    <property type="match status" value="1"/>
</dbReference>
<dbReference type="SUPFAM" id="SSF54695">
    <property type="entry name" value="POZ domain"/>
    <property type="match status" value="2"/>
</dbReference>
<dbReference type="PROSITE" id="PS50097">
    <property type="entry name" value="BTB"/>
    <property type="match status" value="2"/>
</dbReference>
<sequence length="837" mass="94476">MAGSGGPIGSGALTGGVRSKVAPSVDFDHSCSDSVEYLTLNFGPFETVHRWRRLPPCDEFVGARRSKHTVVAYKDAIYVFGGDNGKTMLNDLLRFDVKDCSWCRAFTTGTPPAPRYHHSAVVYGSSMFVFGGYTGDIYSNSNLKNKNDLFEYKFATGQWTEWKIEGRLPVARSAHGATVYSDKLWIFAGYDGNARLNDMWTIGLQDRELTCWEEVAQSGEIPPSCCNFPVAVCRDKMFVFSGQSGAKITNNLFQFEFKDKTWTRIPTEHLLRGSPPPPQRRYGHTMVAFDRHLYVFGGAADNTLPNELHCYDVDFQTWEVVQPSSDSEVGGAEMPERASSSEDASTLTSEERSSFKKSRDVFGLDFGTTSAKQPVHLASELPSGRLFHAAAVISDAMYIFGGTVDNNIRSGEMYRFQFSCYPKCTLHEDYGRLWEGRQFCDVEFVLGEKEECVQGHVAIVTARSRWLRRKIVQAQEWLAQKLEEDGALAPKEAPGPAVGRARPPLLRVAIREAEARPFEVLMQFLYTDKIKYPRKGHVEDVLLIMDVYKLALSFQLCRLEQLCRQYIEASVDLQNVLVVCESAARLQLGQLKEHCLNFIVKESHFNQVIMMKEFERLSSPLIVEIVRRKQQPPPRTPSDQPVDIGTSLIQDMKAYLEGAGSEFCDITLLLDGQPRPAHKAILAARSSYFEAMFRSFMPEDGQVNISIGEMVPSRQAFESMLRYIYYGEVNMPPEDSLYLFAAPYYYGFYNNRLQAYCKQNLEMNVTVQNVLQILEAADKTQALDMKRHCLHIIVHQFTKVSKLPTLRLLSQQLLLDIIDSLASHISDKQCAELGADI</sequence>
<proteinExistence type="evidence at protein level"/>
<gene>
    <name evidence="9" type="primary">Lztr1</name>
    <name type="synonym">Tcfl2</name>
</gene>
<evidence type="ECO:0000250" key="1">
    <source>
        <dbReference type="UniProtKB" id="Q8N653"/>
    </source>
</evidence>
<evidence type="ECO:0000255" key="2"/>
<evidence type="ECO:0000255" key="3">
    <source>
        <dbReference type="PROSITE-ProRule" id="PRU00037"/>
    </source>
</evidence>
<evidence type="ECO:0000256" key="4">
    <source>
        <dbReference type="SAM" id="MobiDB-lite"/>
    </source>
</evidence>
<evidence type="ECO:0000269" key="5">
    <source>
    </source>
</evidence>
<evidence type="ECO:0000269" key="6">
    <source>
    </source>
</evidence>
<evidence type="ECO:0000303" key="7">
    <source>
    </source>
</evidence>
<evidence type="ECO:0000305" key="8"/>
<evidence type="ECO:0000312" key="9">
    <source>
        <dbReference type="MGI" id="MGI:1914113"/>
    </source>
</evidence>
<feature type="initiator methionine" description="Removed" evidence="1">
    <location>
        <position position="1"/>
    </location>
</feature>
<feature type="chain" id="PRO_0000119136" description="Leucine-zipper-like transcriptional regulator 1">
    <location>
        <begin position="2"/>
        <end position="837"/>
    </location>
</feature>
<feature type="repeat" description="Kelch 1" evidence="2">
    <location>
        <begin position="76"/>
        <end position="125"/>
    </location>
</feature>
<feature type="repeat" description="Kelch 2" evidence="2">
    <location>
        <begin position="127"/>
        <end position="182"/>
    </location>
</feature>
<feature type="repeat" description="Kelch 3" evidence="2">
    <location>
        <begin position="184"/>
        <end position="235"/>
    </location>
</feature>
<feature type="repeat" description="Kelch 4" evidence="2">
    <location>
        <begin position="236"/>
        <end position="282"/>
    </location>
</feature>
<feature type="repeat" description="Kelch 5" evidence="2">
    <location>
        <begin position="292"/>
        <end position="338"/>
    </location>
</feature>
<feature type="repeat" description="Kelch 6" evidence="2">
    <location>
        <begin position="396"/>
        <end position="447"/>
    </location>
</feature>
<feature type="domain" description="BTB 1" evidence="3">
    <location>
        <begin position="440"/>
        <end position="534"/>
    </location>
</feature>
<feature type="domain" description="BTB 2" evidence="3">
    <location>
        <begin position="664"/>
        <end position="733"/>
    </location>
</feature>
<feature type="region of interest" description="Disordered" evidence="4">
    <location>
        <begin position="324"/>
        <end position="352"/>
    </location>
</feature>
<feature type="modified residue" description="N-acetylalanine" evidence="1">
    <location>
        <position position="2"/>
    </location>
</feature>
<feature type="splice variant" id="VSP_007170" description="In isoform 2." evidence="7">
    <original>VSKLPTLRLLSQQLLLDIIDSLASHISDKQCAELGADI</original>
    <variation>VRLWPQCSRSQLSPAGLGTSWPLSTILRQPRPEQARPQEDSSAHPGRLVSSSFGHLCRSLSCPRCGC</variation>
    <location>
        <begin position="800"/>
        <end position="837"/>
    </location>
</feature>
<feature type="sequence conflict" description="In Ref. 2; AAH34400." evidence="8" ref="2">
    <location>
        <position position="330"/>
    </location>
</feature>
<feature type="sequence conflict" description="In Ref. 2; AAH34400." evidence="8" ref="2">
    <original>V</original>
    <variation>A</variation>
    <location>
        <position position="375"/>
    </location>
</feature>
<feature type="sequence conflict" description="In Ref. 2; AAH34400." evidence="8" ref="2">
    <original>G</original>
    <variation>S</variation>
    <location>
        <position position="495"/>
    </location>
</feature>
<feature type="sequence conflict" description="In Ref. 1; BAC38905." evidence="8" ref="1">
    <original>M</original>
    <variation>V</variation>
    <location>
        <position position="545"/>
    </location>
</feature>
<feature type="sequence conflict" description="In Ref. 1; BAC40662." evidence="8" ref="1">
    <original>I</original>
    <variation>M</variation>
    <location>
        <position position="707"/>
    </location>
</feature>
<keyword id="KW-0007">Acetylation</keyword>
<keyword id="KW-0025">Alternative splicing</keyword>
<keyword id="KW-0967">Endosome</keyword>
<keyword id="KW-0333">Golgi apparatus</keyword>
<keyword id="KW-0880">Kelch repeat</keyword>
<keyword id="KW-0472">Membrane</keyword>
<keyword id="KW-0597">Phosphoprotein</keyword>
<keyword id="KW-1185">Reference proteome</keyword>
<keyword id="KW-0677">Repeat</keyword>
<keyword id="KW-0833">Ubl conjugation pathway</keyword>
<accession>Q9CQ33</accession>